<evidence type="ECO:0000255" key="1"/>
<evidence type="ECO:0000305" key="2"/>
<reference key="1">
    <citation type="journal article" date="2004" name="Science">
        <title>The 1.2-megabase genome sequence of Mimivirus.</title>
        <authorList>
            <person name="Raoult D."/>
            <person name="Audic S."/>
            <person name="Robert C."/>
            <person name="Abergel C."/>
            <person name="Renesto P."/>
            <person name="Ogata H."/>
            <person name="La Scola B."/>
            <person name="Susan M."/>
            <person name="Claverie J.-M."/>
        </authorList>
    </citation>
    <scope>NUCLEOTIDE SEQUENCE [LARGE SCALE GENOMIC DNA]</scope>
    <source>
        <strain>Rowbotham-Bradford</strain>
    </source>
</reference>
<sequence>MNKDTDNVEVNIVYKNRTISVPINITMSICALTALLKSYSITGSYHGYNHNYEYHHYHGYNHYNGYNYGKNNKGKIRVGVVSDHKPPFVLTKFPNEMLLLNFRIKEGDRFYVIFEDDYGIPNTHAHDIHESYKQYEPYEPYKSQKNIYIKTLKRAIIADNHRMVEYILDKELVDLHSNKKLYEKCIKLSKIHSRTYIQNLLEVVAL</sequence>
<gene>
    <name type="ordered locus">MIMI_R660</name>
</gene>
<keyword id="KW-0472">Membrane</keyword>
<keyword id="KW-1185">Reference proteome</keyword>
<keyword id="KW-0812">Transmembrane</keyword>
<keyword id="KW-1133">Transmembrane helix</keyword>
<name>YR660_MIMIV</name>
<feature type="chain" id="PRO_0000071305" description="Uncharacterized protein R660">
    <location>
        <begin position="1"/>
        <end position="206"/>
    </location>
</feature>
<feature type="transmembrane region" description="Helical" evidence="1">
    <location>
        <begin position="21"/>
        <end position="43"/>
    </location>
</feature>
<organismHost>
    <name type="scientific">Acanthamoeba polyphaga</name>
    <name type="common">Amoeba</name>
    <dbReference type="NCBI Taxonomy" id="5757"/>
</organismHost>
<organism>
    <name type="scientific">Acanthamoeba polyphaga mimivirus</name>
    <name type="common">APMV</name>
    <dbReference type="NCBI Taxonomy" id="212035"/>
    <lineage>
        <taxon>Viruses</taxon>
        <taxon>Varidnaviria</taxon>
        <taxon>Bamfordvirae</taxon>
        <taxon>Nucleocytoviricota</taxon>
        <taxon>Megaviricetes</taxon>
        <taxon>Imitervirales</taxon>
        <taxon>Mimiviridae</taxon>
        <taxon>Megamimivirinae</taxon>
        <taxon>Mimivirus</taxon>
        <taxon>Mimivirus bradfordmassiliense</taxon>
    </lineage>
</organism>
<comment type="subcellular location">
    <subcellularLocation>
        <location evidence="2">Membrane</location>
        <topology evidence="2">Single-pass membrane protein</topology>
    </subcellularLocation>
</comment>
<accession>Q5UR15</accession>
<dbReference type="EMBL" id="AY653733">
    <property type="protein sequence ID" value="AAV50921.1"/>
    <property type="molecule type" value="Genomic_DNA"/>
</dbReference>
<dbReference type="KEGG" id="vg:9925305"/>
<dbReference type="Proteomes" id="UP000001134">
    <property type="component" value="Genome"/>
</dbReference>
<dbReference type="GO" id="GO:0016020">
    <property type="term" value="C:membrane"/>
    <property type="evidence" value="ECO:0007669"/>
    <property type="project" value="UniProtKB-SubCell"/>
</dbReference>
<proteinExistence type="predicted"/>
<protein>
    <recommendedName>
        <fullName>Uncharacterized protein R660</fullName>
    </recommendedName>
</protein>